<sequence>MASHEEILADKAIFAYLHRMIGDEGIELIRRFPTDKEYSDEELAEVTKINLNSVRNTLYTLYEHRLAKYRRIKNNETGWLTYLWELELDNMYDSVSKDLEIILEKLRKRYKYESENAFYNCPNCGNTITFSDAMDSQFVCQECENKMVHFDNDLLVNALQKRIARIEENLGHV</sequence>
<keyword id="KW-0238">DNA-binding</keyword>
<keyword id="KW-1185">Reference proteome</keyword>
<keyword id="KW-0804">Transcription</keyword>
<keyword id="KW-0805">Transcription regulation</keyword>
<organism>
    <name type="scientific">Methanospirillum hungatei JF-1 (strain ATCC 27890 / DSM 864 / NBRC 100397 / JF-1)</name>
    <dbReference type="NCBI Taxonomy" id="323259"/>
    <lineage>
        <taxon>Archaea</taxon>
        <taxon>Methanobacteriati</taxon>
        <taxon>Methanobacteriota</taxon>
        <taxon>Stenosarchaea group</taxon>
        <taxon>Methanomicrobia</taxon>
        <taxon>Methanomicrobiales</taxon>
        <taxon>Methanospirillaceae</taxon>
        <taxon>Methanospirillum</taxon>
    </lineage>
</organism>
<dbReference type="EMBL" id="CP000254">
    <property type="protein sequence ID" value="ABD42491.1"/>
    <property type="molecule type" value="Genomic_DNA"/>
</dbReference>
<dbReference type="RefSeq" id="WP_011449746.1">
    <property type="nucleotide sequence ID" value="NC_007796.1"/>
</dbReference>
<dbReference type="SMR" id="Q2FT22"/>
<dbReference type="FunCoup" id="Q2FT22">
    <property type="interactions" value="7"/>
</dbReference>
<dbReference type="STRING" id="323259.Mhun_2797"/>
<dbReference type="EnsemblBacteria" id="ABD42491">
    <property type="protein sequence ID" value="ABD42491"/>
    <property type="gene ID" value="Mhun_2797"/>
</dbReference>
<dbReference type="GeneID" id="3923035"/>
<dbReference type="KEGG" id="mhu:Mhun_2797"/>
<dbReference type="eggNOG" id="arCOG04270">
    <property type="taxonomic scope" value="Archaea"/>
</dbReference>
<dbReference type="HOGENOM" id="CLU_100097_0_0_2"/>
<dbReference type="InParanoid" id="Q2FT22"/>
<dbReference type="OrthoDB" id="5935at2157"/>
<dbReference type="Proteomes" id="UP000001941">
    <property type="component" value="Chromosome"/>
</dbReference>
<dbReference type="GO" id="GO:0003677">
    <property type="term" value="F:DNA binding"/>
    <property type="evidence" value="ECO:0007669"/>
    <property type="project" value="UniProtKB-KW"/>
</dbReference>
<dbReference type="GO" id="GO:0006355">
    <property type="term" value="P:regulation of DNA-templated transcription"/>
    <property type="evidence" value="ECO:0007669"/>
    <property type="project" value="InterPro"/>
</dbReference>
<dbReference type="GO" id="GO:0006367">
    <property type="term" value="P:transcription initiation at RNA polymerase II promoter"/>
    <property type="evidence" value="ECO:0007669"/>
    <property type="project" value="InterPro"/>
</dbReference>
<dbReference type="Gene3D" id="2.20.28.30">
    <property type="entry name" value="RNA polymerase ii, chain L"/>
    <property type="match status" value="1"/>
</dbReference>
<dbReference type="Gene3D" id="1.10.10.10">
    <property type="entry name" value="Winged helix-like DNA-binding domain superfamily/Winged helix DNA-binding domain"/>
    <property type="match status" value="1"/>
</dbReference>
<dbReference type="HAMAP" id="MF_01909">
    <property type="entry name" value="TFE_arch"/>
    <property type="match status" value="1"/>
</dbReference>
<dbReference type="InterPro" id="IPR016481">
    <property type="entry name" value="TF_E_archaea"/>
</dbReference>
<dbReference type="InterPro" id="IPR039997">
    <property type="entry name" value="TFE"/>
</dbReference>
<dbReference type="InterPro" id="IPR017919">
    <property type="entry name" value="TFIIE/TFIIEa_HTH"/>
</dbReference>
<dbReference type="InterPro" id="IPR002853">
    <property type="entry name" value="TFIIE_asu"/>
</dbReference>
<dbReference type="InterPro" id="IPR024550">
    <property type="entry name" value="TFIIEa/SarR/Rpc3_HTH_dom"/>
</dbReference>
<dbReference type="InterPro" id="IPR036388">
    <property type="entry name" value="WH-like_DNA-bd_sf"/>
</dbReference>
<dbReference type="InterPro" id="IPR036390">
    <property type="entry name" value="WH_DNA-bd_sf"/>
</dbReference>
<dbReference type="PANTHER" id="PTHR13097:SF7">
    <property type="entry name" value="GENERAL TRANSCRIPTION FACTOR IIE SUBUNIT 1"/>
    <property type="match status" value="1"/>
</dbReference>
<dbReference type="PANTHER" id="PTHR13097">
    <property type="entry name" value="TRANSCRIPTION INITIATION FACTOR IIE, ALPHA SUBUNIT"/>
    <property type="match status" value="1"/>
</dbReference>
<dbReference type="Pfam" id="PF02002">
    <property type="entry name" value="TFIIE_alpha"/>
    <property type="match status" value="1"/>
</dbReference>
<dbReference type="PIRSF" id="PIRSF006373">
    <property type="entry name" value="TF_E_archaea"/>
    <property type="match status" value="1"/>
</dbReference>
<dbReference type="SMART" id="SM00531">
    <property type="entry name" value="TFIIE"/>
    <property type="match status" value="1"/>
</dbReference>
<dbReference type="SUPFAM" id="SSF46785">
    <property type="entry name" value="Winged helix' DNA-binding domain"/>
    <property type="match status" value="1"/>
</dbReference>
<dbReference type="PROSITE" id="PS51344">
    <property type="entry name" value="HTH_TFE_IIE"/>
    <property type="match status" value="1"/>
</dbReference>
<name>TFE_METHJ</name>
<evidence type="ECO:0000255" key="1">
    <source>
        <dbReference type="HAMAP-Rule" id="MF_01909"/>
    </source>
</evidence>
<gene>
    <name evidence="1" type="primary">tfe</name>
    <name type="ordered locus">Mhun_2797</name>
</gene>
<proteinExistence type="inferred from homology"/>
<accession>Q2FT22</accession>
<reference key="1">
    <citation type="journal article" date="2016" name="Stand. Genomic Sci.">
        <title>Complete genome sequence of Methanospirillum hungatei type strain JF1.</title>
        <authorList>
            <person name="Gunsalus R.P."/>
            <person name="Cook L.E."/>
            <person name="Crable B."/>
            <person name="Rohlin L."/>
            <person name="McDonald E."/>
            <person name="Mouttaki H."/>
            <person name="Sieber J.R."/>
            <person name="Poweleit N."/>
            <person name="Zhou H."/>
            <person name="Lapidus A.L."/>
            <person name="Daligault H.E."/>
            <person name="Land M."/>
            <person name="Gilna P."/>
            <person name="Ivanova N."/>
            <person name="Kyrpides N."/>
            <person name="Culley D.E."/>
            <person name="McInerney M.J."/>
        </authorList>
    </citation>
    <scope>NUCLEOTIDE SEQUENCE [LARGE SCALE GENOMIC DNA]</scope>
    <source>
        <strain>ATCC 27890 / DSM 864 / NBRC 100397 / JF-1</strain>
    </source>
</reference>
<comment type="function">
    <text evidence="1">Transcription factor that plays a role in the activation of archaeal genes transcribed by RNA polymerase. Facilitates transcription initiation by enhancing TATA-box recognition by TATA-box-binding protein (Tbp), and transcription factor B (Tfb) and RNA polymerase recruitment. Not absolutely required for transcription in vitro, but particularly important in cases where Tbp or Tfb function is not optimal. It dynamically alters the nucleic acid-binding properties of RNA polymerases by stabilizing the initiation complex and destabilizing elongation complexes. Seems to translocate with the RNA polymerase following initiation and acts by binding to the non template strand of the transcription bubble in elongation complexes.</text>
</comment>
<comment type="subunit">
    <text evidence="1">Monomer. Interaction with RNA polymerase subunits RpoF and RpoE is necessary for Tfe stimulatory transcription activity. Able to interact with Tbp and RNA polymerase in the absence of DNA promoter. Interacts both with the preinitiation and elongation complexes.</text>
</comment>
<comment type="domain">
    <text evidence="1">The winged helix domain is involved in binding to DNA in the preinitiation complex.</text>
</comment>
<comment type="similarity">
    <text evidence="1">Belongs to the TFE family.</text>
</comment>
<feature type="chain" id="PRO_0000326612" description="Transcription factor E">
    <location>
        <begin position="1"/>
        <end position="173"/>
    </location>
</feature>
<feature type="domain" description="HTH TFE/IIEalpha-type" evidence="1">
    <location>
        <begin position="9"/>
        <end position="92"/>
    </location>
</feature>
<protein>
    <recommendedName>
        <fullName evidence="1">Transcription factor E</fullName>
        <shortName evidence="1">TFE</shortName>
    </recommendedName>
    <alternativeName>
        <fullName evidence="1">TFIIE subunit alpha homolog</fullName>
    </alternativeName>
    <alternativeName>
        <fullName evidence="1">Transcription initiation factor TFIIE</fullName>
    </alternativeName>
</protein>